<accession>Q7W9M7</accession>
<keyword id="KW-0028">Amino-acid biosynthesis</keyword>
<keyword id="KW-0963">Cytoplasm</keyword>
<keyword id="KW-0521">NADP</keyword>
<keyword id="KW-0560">Oxidoreductase</keyword>
<keyword id="KW-0641">Proline biosynthesis</keyword>
<proteinExistence type="inferred from homology"/>
<organism>
    <name type="scientific">Bordetella parapertussis (strain 12822 / ATCC BAA-587 / NCTC 13253)</name>
    <dbReference type="NCBI Taxonomy" id="257311"/>
    <lineage>
        <taxon>Bacteria</taxon>
        <taxon>Pseudomonadati</taxon>
        <taxon>Pseudomonadota</taxon>
        <taxon>Betaproteobacteria</taxon>
        <taxon>Burkholderiales</taxon>
        <taxon>Alcaligenaceae</taxon>
        <taxon>Bordetella</taxon>
    </lineage>
</organism>
<dbReference type="EC" id="1.2.1.41" evidence="1"/>
<dbReference type="EMBL" id="BX640428">
    <property type="protein sequence ID" value="CAE37029.1"/>
    <property type="molecule type" value="Genomic_DNA"/>
</dbReference>
<dbReference type="RefSeq" id="WP_010928173.1">
    <property type="nucleotide sequence ID" value="NC_002928.3"/>
</dbReference>
<dbReference type="SMR" id="Q7W9M7"/>
<dbReference type="GeneID" id="93203492"/>
<dbReference type="KEGG" id="bpa:BPP1728"/>
<dbReference type="HOGENOM" id="CLU_030231_0_0_4"/>
<dbReference type="UniPathway" id="UPA00098">
    <property type="reaction ID" value="UER00360"/>
</dbReference>
<dbReference type="Proteomes" id="UP000001421">
    <property type="component" value="Chromosome"/>
</dbReference>
<dbReference type="GO" id="GO:0005737">
    <property type="term" value="C:cytoplasm"/>
    <property type="evidence" value="ECO:0007669"/>
    <property type="project" value="UniProtKB-SubCell"/>
</dbReference>
<dbReference type="GO" id="GO:0004350">
    <property type="term" value="F:glutamate-5-semialdehyde dehydrogenase activity"/>
    <property type="evidence" value="ECO:0007669"/>
    <property type="project" value="UniProtKB-UniRule"/>
</dbReference>
<dbReference type="GO" id="GO:0050661">
    <property type="term" value="F:NADP binding"/>
    <property type="evidence" value="ECO:0007669"/>
    <property type="project" value="InterPro"/>
</dbReference>
<dbReference type="GO" id="GO:0055129">
    <property type="term" value="P:L-proline biosynthetic process"/>
    <property type="evidence" value="ECO:0007669"/>
    <property type="project" value="UniProtKB-UniRule"/>
</dbReference>
<dbReference type="CDD" id="cd07079">
    <property type="entry name" value="ALDH_F18-19_ProA-GPR"/>
    <property type="match status" value="1"/>
</dbReference>
<dbReference type="FunFam" id="3.40.309.10:FF:000006">
    <property type="entry name" value="Gamma-glutamyl phosphate reductase"/>
    <property type="match status" value="1"/>
</dbReference>
<dbReference type="Gene3D" id="3.40.605.10">
    <property type="entry name" value="Aldehyde Dehydrogenase, Chain A, domain 1"/>
    <property type="match status" value="1"/>
</dbReference>
<dbReference type="Gene3D" id="3.40.309.10">
    <property type="entry name" value="Aldehyde Dehydrogenase, Chain A, domain 2"/>
    <property type="match status" value="1"/>
</dbReference>
<dbReference type="HAMAP" id="MF_00412">
    <property type="entry name" value="ProA"/>
    <property type="match status" value="1"/>
</dbReference>
<dbReference type="InterPro" id="IPR016161">
    <property type="entry name" value="Ald_DH/histidinol_DH"/>
</dbReference>
<dbReference type="InterPro" id="IPR016163">
    <property type="entry name" value="Ald_DH_C"/>
</dbReference>
<dbReference type="InterPro" id="IPR016162">
    <property type="entry name" value="Ald_DH_N"/>
</dbReference>
<dbReference type="InterPro" id="IPR015590">
    <property type="entry name" value="Aldehyde_DH_dom"/>
</dbReference>
<dbReference type="InterPro" id="IPR020593">
    <property type="entry name" value="G-glutamylP_reductase_CS"/>
</dbReference>
<dbReference type="InterPro" id="IPR012134">
    <property type="entry name" value="Glu-5-SA_DH"/>
</dbReference>
<dbReference type="InterPro" id="IPR000965">
    <property type="entry name" value="GPR_dom"/>
</dbReference>
<dbReference type="NCBIfam" id="NF001221">
    <property type="entry name" value="PRK00197.1"/>
    <property type="match status" value="1"/>
</dbReference>
<dbReference type="NCBIfam" id="TIGR00407">
    <property type="entry name" value="proA"/>
    <property type="match status" value="1"/>
</dbReference>
<dbReference type="PANTHER" id="PTHR11063:SF8">
    <property type="entry name" value="DELTA-1-PYRROLINE-5-CARBOXYLATE SYNTHASE"/>
    <property type="match status" value="1"/>
</dbReference>
<dbReference type="PANTHER" id="PTHR11063">
    <property type="entry name" value="GLUTAMATE SEMIALDEHYDE DEHYDROGENASE"/>
    <property type="match status" value="1"/>
</dbReference>
<dbReference type="Pfam" id="PF00171">
    <property type="entry name" value="Aldedh"/>
    <property type="match status" value="2"/>
</dbReference>
<dbReference type="PIRSF" id="PIRSF000151">
    <property type="entry name" value="GPR"/>
    <property type="match status" value="1"/>
</dbReference>
<dbReference type="SUPFAM" id="SSF53720">
    <property type="entry name" value="ALDH-like"/>
    <property type="match status" value="1"/>
</dbReference>
<dbReference type="PROSITE" id="PS01223">
    <property type="entry name" value="PROA"/>
    <property type="match status" value="1"/>
</dbReference>
<evidence type="ECO:0000255" key="1">
    <source>
        <dbReference type="HAMAP-Rule" id="MF_00412"/>
    </source>
</evidence>
<gene>
    <name evidence="1" type="primary">proA</name>
    <name type="ordered locus">BPP1728</name>
</gene>
<comment type="function">
    <text evidence="1">Catalyzes the NADPH-dependent reduction of L-glutamate 5-phosphate into L-glutamate 5-semialdehyde and phosphate. The product spontaneously undergoes cyclization to form 1-pyrroline-5-carboxylate.</text>
</comment>
<comment type="catalytic activity">
    <reaction evidence="1">
        <text>L-glutamate 5-semialdehyde + phosphate + NADP(+) = L-glutamyl 5-phosphate + NADPH + H(+)</text>
        <dbReference type="Rhea" id="RHEA:19541"/>
        <dbReference type="ChEBI" id="CHEBI:15378"/>
        <dbReference type="ChEBI" id="CHEBI:43474"/>
        <dbReference type="ChEBI" id="CHEBI:57783"/>
        <dbReference type="ChEBI" id="CHEBI:58066"/>
        <dbReference type="ChEBI" id="CHEBI:58274"/>
        <dbReference type="ChEBI" id="CHEBI:58349"/>
        <dbReference type="EC" id="1.2.1.41"/>
    </reaction>
</comment>
<comment type="pathway">
    <text evidence="1">Amino-acid biosynthesis; L-proline biosynthesis; L-glutamate 5-semialdehyde from L-glutamate: step 2/2.</text>
</comment>
<comment type="subcellular location">
    <subcellularLocation>
        <location evidence="1">Cytoplasm</location>
    </subcellularLocation>
</comment>
<comment type="similarity">
    <text evidence="1">Belongs to the gamma-glutamyl phosphate reductase family.</text>
</comment>
<reference key="1">
    <citation type="journal article" date="2003" name="Nat. Genet.">
        <title>Comparative analysis of the genome sequences of Bordetella pertussis, Bordetella parapertussis and Bordetella bronchiseptica.</title>
        <authorList>
            <person name="Parkhill J."/>
            <person name="Sebaihia M."/>
            <person name="Preston A."/>
            <person name="Murphy L.D."/>
            <person name="Thomson N.R."/>
            <person name="Harris D.E."/>
            <person name="Holden M.T.G."/>
            <person name="Churcher C.M."/>
            <person name="Bentley S.D."/>
            <person name="Mungall K.L."/>
            <person name="Cerdeno-Tarraga A.-M."/>
            <person name="Temple L."/>
            <person name="James K.D."/>
            <person name="Harris B."/>
            <person name="Quail M.A."/>
            <person name="Achtman M."/>
            <person name="Atkin R."/>
            <person name="Baker S."/>
            <person name="Basham D."/>
            <person name="Bason N."/>
            <person name="Cherevach I."/>
            <person name="Chillingworth T."/>
            <person name="Collins M."/>
            <person name="Cronin A."/>
            <person name="Davis P."/>
            <person name="Doggett J."/>
            <person name="Feltwell T."/>
            <person name="Goble A."/>
            <person name="Hamlin N."/>
            <person name="Hauser H."/>
            <person name="Holroyd S."/>
            <person name="Jagels K."/>
            <person name="Leather S."/>
            <person name="Moule S."/>
            <person name="Norberczak H."/>
            <person name="O'Neil S."/>
            <person name="Ormond D."/>
            <person name="Price C."/>
            <person name="Rabbinowitsch E."/>
            <person name="Rutter S."/>
            <person name="Sanders M."/>
            <person name="Saunders D."/>
            <person name="Seeger K."/>
            <person name="Sharp S."/>
            <person name="Simmonds M."/>
            <person name="Skelton J."/>
            <person name="Squares R."/>
            <person name="Squares S."/>
            <person name="Stevens K."/>
            <person name="Unwin L."/>
            <person name="Whitehead S."/>
            <person name="Barrell B.G."/>
            <person name="Maskell D.J."/>
        </authorList>
    </citation>
    <scope>NUCLEOTIDE SEQUENCE [LARGE SCALE GENOMIC DNA]</scope>
    <source>
        <strain>12822 / ATCC BAA-587 / NCTC 13253</strain>
    </source>
</reference>
<protein>
    <recommendedName>
        <fullName evidence="1">Gamma-glutamyl phosphate reductase</fullName>
        <shortName evidence="1">GPR</shortName>
        <ecNumber evidence="1">1.2.1.41</ecNumber>
    </recommendedName>
    <alternativeName>
        <fullName evidence="1">Glutamate-5-semialdehyde dehydrogenase</fullName>
    </alternativeName>
    <alternativeName>
        <fullName evidence="1">Glutamyl-gamma-semialdehyde dehydrogenase</fullName>
        <shortName evidence="1">GSA dehydrogenase</shortName>
    </alternativeName>
</protein>
<feature type="chain" id="PRO_0000189702" description="Gamma-glutamyl phosphate reductase">
    <location>
        <begin position="1"/>
        <end position="419"/>
    </location>
</feature>
<name>PROA_BORPA</name>
<sequence>MSSIETYMQSVGEQTRTASRAMMRATGAAKNQALLAMAEAILAQRAELQAANAKDVAAARANGLEAALLDRLTLSDRSIALMAEGLRQIAALPDPVGSITATSVRPNGMRVAQMRVPLGVIGIIYESRPNVTIDAAALCLKSGNATILRGGSEALHSNVALGRIVQAGLQAAGLPTAAVQVIDTTDRAAVGKLVTMTEHVDVIVPRGGKGLISRLAQEARVPLIKHLDGNCHVYVDAAADLAKAHDIAFNAKTYRYGVCGAMETLLVHADVAQRLLPVLGQALHEHGVELRGCARALQWLPEGKPADDADWATEYLGPILAVRVVDTIDEAMDHIARWGSGHTDAIVTENLSAAQRFQREVDSSSVYVNLPTCFADGFEYGLGAEIGISTNRLHARGPVGLEGLTTLKWVLNGEGQVRG</sequence>